<evidence type="ECO:0000256" key="1">
    <source>
        <dbReference type="SAM" id="MobiDB-lite"/>
    </source>
</evidence>
<keyword id="KW-1185">Reference proteome</keyword>
<reference key="1">
    <citation type="journal article" date="2005" name="Nature">
        <title>The genome of the social amoeba Dictyostelium discoideum.</title>
        <authorList>
            <person name="Eichinger L."/>
            <person name="Pachebat J.A."/>
            <person name="Gloeckner G."/>
            <person name="Rajandream M.A."/>
            <person name="Sucgang R."/>
            <person name="Berriman M."/>
            <person name="Song J."/>
            <person name="Olsen R."/>
            <person name="Szafranski K."/>
            <person name="Xu Q."/>
            <person name="Tunggal B."/>
            <person name="Kummerfeld S."/>
            <person name="Madera M."/>
            <person name="Konfortov B.A."/>
            <person name="Rivero F."/>
            <person name="Bankier A.T."/>
            <person name="Lehmann R."/>
            <person name="Hamlin N."/>
            <person name="Davies R."/>
            <person name="Gaudet P."/>
            <person name="Fey P."/>
            <person name="Pilcher K."/>
            <person name="Chen G."/>
            <person name="Saunders D."/>
            <person name="Sodergren E.J."/>
            <person name="Davis P."/>
            <person name="Kerhornou A."/>
            <person name="Nie X."/>
            <person name="Hall N."/>
            <person name="Anjard C."/>
            <person name="Hemphill L."/>
            <person name="Bason N."/>
            <person name="Farbrother P."/>
            <person name="Desany B."/>
            <person name="Just E."/>
            <person name="Morio T."/>
            <person name="Rost R."/>
            <person name="Churcher C.M."/>
            <person name="Cooper J."/>
            <person name="Haydock S."/>
            <person name="van Driessche N."/>
            <person name="Cronin A."/>
            <person name="Goodhead I."/>
            <person name="Muzny D.M."/>
            <person name="Mourier T."/>
            <person name="Pain A."/>
            <person name="Lu M."/>
            <person name="Harper D."/>
            <person name="Lindsay R."/>
            <person name="Hauser H."/>
            <person name="James K.D."/>
            <person name="Quiles M."/>
            <person name="Madan Babu M."/>
            <person name="Saito T."/>
            <person name="Buchrieser C."/>
            <person name="Wardroper A."/>
            <person name="Felder M."/>
            <person name="Thangavelu M."/>
            <person name="Johnson D."/>
            <person name="Knights A."/>
            <person name="Loulseged H."/>
            <person name="Mungall K.L."/>
            <person name="Oliver K."/>
            <person name="Price C."/>
            <person name="Quail M.A."/>
            <person name="Urushihara H."/>
            <person name="Hernandez J."/>
            <person name="Rabbinowitsch E."/>
            <person name="Steffen D."/>
            <person name="Sanders M."/>
            <person name="Ma J."/>
            <person name="Kohara Y."/>
            <person name="Sharp S."/>
            <person name="Simmonds M.N."/>
            <person name="Spiegler S."/>
            <person name="Tivey A."/>
            <person name="Sugano S."/>
            <person name="White B."/>
            <person name="Walker D."/>
            <person name="Woodward J.R."/>
            <person name="Winckler T."/>
            <person name="Tanaka Y."/>
            <person name="Shaulsky G."/>
            <person name="Schleicher M."/>
            <person name="Weinstock G.M."/>
            <person name="Rosenthal A."/>
            <person name="Cox E.C."/>
            <person name="Chisholm R.L."/>
            <person name="Gibbs R.A."/>
            <person name="Loomis W.F."/>
            <person name="Platzer M."/>
            <person name="Kay R.R."/>
            <person name="Williams J.G."/>
            <person name="Dear P.H."/>
            <person name="Noegel A.A."/>
            <person name="Barrell B.G."/>
            <person name="Kuspa A."/>
        </authorList>
    </citation>
    <scope>NUCLEOTIDE SEQUENCE [LARGE SCALE GENOMIC DNA]</scope>
    <source>
        <strain>AX4</strain>
    </source>
</reference>
<sequence>MNENNKNNSSEDLNNNNNNNNNNNNIKKTHHRYSAKYKHSLVPSNVGNSGLSGNGVSQKELMSTFKYKSTRTPRLKIEPTIDNLFPSQSTSKSKSNTTNSSPITIMKPKVSKSISNYSNNKYNNNNNNNNNVSTSTSTPIPTTATTTNGNNIDSSLFTSLNSIQTTINGKQSTMIPFSPYSLINCLNSMSSLDENEINNLPIFAPILPPINQQSVNDLNNNNKNDNNKNDNNKNNNNNNNNDNNNNDDNNPTTKKKKVKSQYYMESLAERLSNSNSNGE</sequence>
<feature type="chain" id="PRO_0000348213" description="Putative uncharacterized protein DDB_G0268234">
    <location>
        <begin position="1"/>
        <end position="279"/>
    </location>
</feature>
<feature type="region of interest" description="Disordered" evidence="1">
    <location>
        <begin position="1"/>
        <end position="27"/>
    </location>
</feature>
<feature type="region of interest" description="Disordered" evidence="1">
    <location>
        <begin position="83"/>
        <end position="153"/>
    </location>
</feature>
<feature type="region of interest" description="Disordered" evidence="1">
    <location>
        <begin position="213"/>
        <end position="260"/>
    </location>
</feature>
<feature type="compositionally biased region" description="Low complexity" evidence="1">
    <location>
        <begin position="1"/>
        <end position="25"/>
    </location>
</feature>
<feature type="compositionally biased region" description="Low complexity" evidence="1">
    <location>
        <begin position="86"/>
        <end position="151"/>
    </location>
</feature>
<feature type="compositionally biased region" description="Low complexity" evidence="1">
    <location>
        <begin position="232"/>
        <end position="250"/>
    </location>
</feature>
<organism>
    <name type="scientific">Dictyostelium discoideum</name>
    <name type="common">Social amoeba</name>
    <dbReference type="NCBI Taxonomy" id="44689"/>
    <lineage>
        <taxon>Eukaryota</taxon>
        <taxon>Amoebozoa</taxon>
        <taxon>Evosea</taxon>
        <taxon>Eumycetozoa</taxon>
        <taxon>Dictyostelia</taxon>
        <taxon>Dictyosteliales</taxon>
        <taxon>Dictyosteliaceae</taxon>
        <taxon>Dictyostelium</taxon>
    </lineage>
</organism>
<protein>
    <recommendedName>
        <fullName>Putative uncharacterized protein DDB_G0268234</fullName>
    </recommendedName>
</protein>
<proteinExistence type="predicted"/>
<accession>Q55F71</accession>
<gene>
    <name type="ORF">DDB_G0268234</name>
</gene>
<name>Y9882_DICDI</name>
<dbReference type="EMBL" id="AAFI02000003">
    <property type="protein sequence ID" value="EAL73570.1"/>
    <property type="molecule type" value="Genomic_DNA"/>
</dbReference>
<dbReference type="RefSeq" id="XP_647662.1">
    <property type="nucleotide sequence ID" value="XM_642570.1"/>
</dbReference>
<dbReference type="PaxDb" id="44689-DDB0189882"/>
<dbReference type="EnsemblProtists" id="EAL73570">
    <property type="protein sequence ID" value="EAL73570"/>
    <property type="gene ID" value="DDB_G0268234"/>
</dbReference>
<dbReference type="GeneID" id="8616479"/>
<dbReference type="KEGG" id="ddi:DDB_G0268234"/>
<dbReference type="dictyBase" id="DDB_G0268234"/>
<dbReference type="VEuPathDB" id="AmoebaDB:DDB_G0268234"/>
<dbReference type="eggNOG" id="ENOG502RIMM">
    <property type="taxonomic scope" value="Eukaryota"/>
</dbReference>
<dbReference type="HOGENOM" id="CLU_999009_0_0_1"/>
<dbReference type="InParanoid" id="Q55F71"/>
<dbReference type="PRO" id="PR:Q55F71"/>
<dbReference type="Proteomes" id="UP000002195">
    <property type="component" value="Chromosome 1"/>
</dbReference>